<evidence type="ECO:0000255" key="1">
    <source>
        <dbReference type="HAMAP-Rule" id="MF_00099"/>
    </source>
</evidence>
<evidence type="ECO:0000256" key="2">
    <source>
        <dbReference type="SAM" id="MobiDB-lite"/>
    </source>
</evidence>
<keyword id="KW-0145">Chemotaxis</keyword>
<keyword id="KW-0963">Cytoplasm</keyword>
<keyword id="KW-0378">Hydrolase</keyword>
<keyword id="KW-0597">Phosphoprotein</keyword>
<keyword id="KW-1185">Reference proteome</keyword>
<dbReference type="EC" id="3.1.1.61" evidence="1"/>
<dbReference type="EC" id="3.5.1.44" evidence="1"/>
<dbReference type="EMBL" id="CP000453">
    <property type="protein sequence ID" value="ABI56342.1"/>
    <property type="molecule type" value="Genomic_DNA"/>
</dbReference>
<dbReference type="RefSeq" id="WP_011628737.1">
    <property type="nucleotide sequence ID" value="NC_008340.1"/>
</dbReference>
<dbReference type="SMR" id="Q0A9Z5"/>
<dbReference type="KEGG" id="aeh:Mlg_0989"/>
<dbReference type="eggNOG" id="COG2201">
    <property type="taxonomic scope" value="Bacteria"/>
</dbReference>
<dbReference type="HOGENOM" id="CLU_000445_51_0_6"/>
<dbReference type="OrthoDB" id="9793421at2"/>
<dbReference type="Proteomes" id="UP000001962">
    <property type="component" value="Chromosome"/>
</dbReference>
<dbReference type="GO" id="GO:0005737">
    <property type="term" value="C:cytoplasm"/>
    <property type="evidence" value="ECO:0007669"/>
    <property type="project" value="UniProtKB-SubCell"/>
</dbReference>
<dbReference type="GO" id="GO:0000156">
    <property type="term" value="F:phosphorelay response regulator activity"/>
    <property type="evidence" value="ECO:0007669"/>
    <property type="project" value="InterPro"/>
</dbReference>
<dbReference type="GO" id="GO:0008984">
    <property type="term" value="F:protein-glutamate methylesterase activity"/>
    <property type="evidence" value="ECO:0007669"/>
    <property type="project" value="UniProtKB-UniRule"/>
</dbReference>
<dbReference type="GO" id="GO:0050568">
    <property type="term" value="F:protein-glutamine glutaminase activity"/>
    <property type="evidence" value="ECO:0007669"/>
    <property type="project" value="UniProtKB-UniRule"/>
</dbReference>
<dbReference type="GO" id="GO:0006935">
    <property type="term" value="P:chemotaxis"/>
    <property type="evidence" value="ECO:0007669"/>
    <property type="project" value="UniProtKB-UniRule"/>
</dbReference>
<dbReference type="CDD" id="cd16432">
    <property type="entry name" value="CheB_Rec"/>
    <property type="match status" value="1"/>
</dbReference>
<dbReference type="CDD" id="cd17541">
    <property type="entry name" value="REC_CheB-like"/>
    <property type="match status" value="1"/>
</dbReference>
<dbReference type="Gene3D" id="3.40.50.2300">
    <property type="match status" value="1"/>
</dbReference>
<dbReference type="Gene3D" id="3.40.50.180">
    <property type="entry name" value="Methylesterase CheB, C-terminal domain"/>
    <property type="match status" value="1"/>
</dbReference>
<dbReference type="HAMAP" id="MF_00099">
    <property type="entry name" value="CheB_chemtxs"/>
    <property type="match status" value="1"/>
</dbReference>
<dbReference type="InterPro" id="IPR008248">
    <property type="entry name" value="CheB-like"/>
</dbReference>
<dbReference type="InterPro" id="IPR035909">
    <property type="entry name" value="CheB_C"/>
</dbReference>
<dbReference type="InterPro" id="IPR011006">
    <property type="entry name" value="CheY-like_superfamily"/>
</dbReference>
<dbReference type="InterPro" id="IPR000673">
    <property type="entry name" value="Sig_transdc_resp-reg_Me-estase"/>
</dbReference>
<dbReference type="InterPro" id="IPR001789">
    <property type="entry name" value="Sig_transdc_resp-reg_receiver"/>
</dbReference>
<dbReference type="NCBIfam" id="NF001965">
    <property type="entry name" value="PRK00742.1"/>
    <property type="match status" value="1"/>
</dbReference>
<dbReference type="PANTHER" id="PTHR42872">
    <property type="entry name" value="PROTEIN-GLUTAMATE METHYLESTERASE/PROTEIN-GLUTAMINE GLUTAMINASE"/>
    <property type="match status" value="1"/>
</dbReference>
<dbReference type="PANTHER" id="PTHR42872:SF3">
    <property type="entry name" value="PROTEIN-GLUTAMATE METHYLESTERASE_PROTEIN-GLUTAMINE GLUTAMINASE 1"/>
    <property type="match status" value="1"/>
</dbReference>
<dbReference type="Pfam" id="PF01339">
    <property type="entry name" value="CheB_methylest"/>
    <property type="match status" value="1"/>
</dbReference>
<dbReference type="Pfam" id="PF00072">
    <property type="entry name" value="Response_reg"/>
    <property type="match status" value="1"/>
</dbReference>
<dbReference type="PIRSF" id="PIRSF000876">
    <property type="entry name" value="RR_chemtxs_CheB"/>
    <property type="match status" value="1"/>
</dbReference>
<dbReference type="SMART" id="SM00448">
    <property type="entry name" value="REC"/>
    <property type="match status" value="1"/>
</dbReference>
<dbReference type="SUPFAM" id="SSF52172">
    <property type="entry name" value="CheY-like"/>
    <property type="match status" value="1"/>
</dbReference>
<dbReference type="SUPFAM" id="SSF52738">
    <property type="entry name" value="Methylesterase CheB, C-terminal domain"/>
    <property type="match status" value="1"/>
</dbReference>
<dbReference type="PROSITE" id="PS50122">
    <property type="entry name" value="CHEB"/>
    <property type="match status" value="1"/>
</dbReference>
<dbReference type="PROSITE" id="PS50110">
    <property type="entry name" value="RESPONSE_REGULATORY"/>
    <property type="match status" value="1"/>
</dbReference>
<gene>
    <name evidence="1" type="primary">cheB</name>
    <name type="ordered locus">Mlg_0989</name>
</gene>
<accession>Q0A9Z5</accession>
<protein>
    <recommendedName>
        <fullName evidence="1">Protein-glutamate methylesterase/protein-glutamine glutaminase</fullName>
        <ecNumber evidence="1">3.1.1.61</ecNumber>
        <ecNumber evidence="1">3.5.1.44</ecNumber>
    </recommendedName>
</protein>
<organism>
    <name type="scientific">Alkalilimnicola ehrlichii (strain ATCC BAA-1101 / DSM 17681 / MLHE-1)</name>
    <dbReference type="NCBI Taxonomy" id="187272"/>
    <lineage>
        <taxon>Bacteria</taxon>
        <taxon>Pseudomonadati</taxon>
        <taxon>Pseudomonadota</taxon>
        <taxon>Gammaproteobacteria</taxon>
        <taxon>Chromatiales</taxon>
        <taxon>Ectothiorhodospiraceae</taxon>
        <taxon>Alkalilimnicola</taxon>
    </lineage>
</organism>
<feature type="chain" id="PRO_0000264255" description="Protein-glutamate methylesterase/protein-glutamine glutaminase">
    <location>
        <begin position="1"/>
        <end position="390"/>
    </location>
</feature>
<feature type="domain" description="Response regulatory" evidence="1">
    <location>
        <begin position="4"/>
        <end position="121"/>
    </location>
</feature>
<feature type="domain" description="CheB-type methylesterase" evidence="1">
    <location>
        <begin position="201"/>
        <end position="390"/>
    </location>
</feature>
<feature type="region of interest" description="Disordered" evidence="2">
    <location>
        <begin position="130"/>
        <end position="198"/>
    </location>
</feature>
<feature type="compositionally biased region" description="Low complexity" evidence="2">
    <location>
        <begin position="136"/>
        <end position="148"/>
    </location>
</feature>
<feature type="compositionally biased region" description="Low complexity" evidence="2">
    <location>
        <begin position="179"/>
        <end position="193"/>
    </location>
</feature>
<feature type="active site" evidence="1">
    <location>
        <position position="212"/>
    </location>
</feature>
<feature type="active site" evidence="1">
    <location>
        <position position="239"/>
    </location>
</feature>
<feature type="active site" evidence="1">
    <location>
        <position position="335"/>
    </location>
</feature>
<feature type="modified residue" description="4-aspartylphosphate" evidence="1">
    <location>
        <position position="55"/>
    </location>
</feature>
<comment type="function">
    <text evidence="1">Involved in chemotaxis. Part of a chemotaxis signal transduction system that modulates chemotaxis in response to various stimuli. Catalyzes the demethylation of specific methylglutamate residues introduced into the chemoreceptors (methyl-accepting chemotaxis proteins or MCP) by CheR. Also mediates the irreversible deamidation of specific glutamine residues to glutamic acid.</text>
</comment>
<comment type="catalytic activity">
    <reaction evidence="1">
        <text>[protein]-L-glutamate 5-O-methyl ester + H2O = L-glutamyl-[protein] + methanol + H(+)</text>
        <dbReference type="Rhea" id="RHEA:23236"/>
        <dbReference type="Rhea" id="RHEA-COMP:10208"/>
        <dbReference type="Rhea" id="RHEA-COMP:10311"/>
        <dbReference type="ChEBI" id="CHEBI:15377"/>
        <dbReference type="ChEBI" id="CHEBI:15378"/>
        <dbReference type="ChEBI" id="CHEBI:17790"/>
        <dbReference type="ChEBI" id="CHEBI:29973"/>
        <dbReference type="ChEBI" id="CHEBI:82795"/>
        <dbReference type="EC" id="3.1.1.61"/>
    </reaction>
</comment>
<comment type="catalytic activity">
    <reaction evidence="1">
        <text>L-glutaminyl-[protein] + H2O = L-glutamyl-[protein] + NH4(+)</text>
        <dbReference type="Rhea" id="RHEA:16441"/>
        <dbReference type="Rhea" id="RHEA-COMP:10207"/>
        <dbReference type="Rhea" id="RHEA-COMP:10208"/>
        <dbReference type="ChEBI" id="CHEBI:15377"/>
        <dbReference type="ChEBI" id="CHEBI:28938"/>
        <dbReference type="ChEBI" id="CHEBI:29973"/>
        <dbReference type="ChEBI" id="CHEBI:30011"/>
        <dbReference type="EC" id="3.5.1.44"/>
    </reaction>
</comment>
<comment type="subcellular location">
    <subcellularLocation>
        <location evidence="1">Cytoplasm</location>
    </subcellularLocation>
</comment>
<comment type="domain">
    <text evidence="1">Contains a C-terminal catalytic domain, and an N-terminal region which modulates catalytic activity.</text>
</comment>
<comment type="PTM">
    <text evidence="1">Phosphorylated by CheA. Phosphorylation of the N-terminal regulatory domain activates the methylesterase activity.</text>
</comment>
<comment type="similarity">
    <text evidence="1">Belongs to the CheB family.</text>
</comment>
<reference key="1">
    <citation type="submission" date="2006-08" db="EMBL/GenBank/DDBJ databases">
        <title>Complete sequence of Alkalilimnicola ehrilichei MLHE-1.</title>
        <authorList>
            <person name="Copeland A."/>
            <person name="Lucas S."/>
            <person name="Lapidus A."/>
            <person name="Barry K."/>
            <person name="Detter J.C."/>
            <person name="Glavina del Rio T."/>
            <person name="Hammon N."/>
            <person name="Israni S."/>
            <person name="Dalin E."/>
            <person name="Tice H."/>
            <person name="Pitluck S."/>
            <person name="Sims D."/>
            <person name="Brettin T."/>
            <person name="Bruce D."/>
            <person name="Han C."/>
            <person name="Tapia R."/>
            <person name="Gilna P."/>
            <person name="Schmutz J."/>
            <person name="Larimer F."/>
            <person name="Land M."/>
            <person name="Hauser L."/>
            <person name="Kyrpides N."/>
            <person name="Mikhailova N."/>
            <person name="Oremland R.S."/>
            <person name="Hoeft S.E."/>
            <person name="Switzer-Blum J."/>
            <person name="Kulp T."/>
            <person name="King G."/>
            <person name="Tabita R."/>
            <person name="Witte B."/>
            <person name="Santini J.M."/>
            <person name="Basu P."/>
            <person name="Hollibaugh J.T."/>
            <person name="Xie G."/>
            <person name="Stolz J.F."/>
            <person name="Richardson P."/>
        </authorList>
    </citation>
    <scope>NUCLEOTIDE SEQUENCE [LARGE SCALE GENOMIC DNA]</scope>
    <source>
        <strain>ATCC BAA-1101 / DSM 17681 / MLHE-1</strain>
    </source>
</reference>
<sequence length="390" mass="41380">MKVRALVVDDSGFFRRRIKSMLEEHPGIEVVGEAANGRQAVEQAQKLRPDVITMDIEMPEMDGITAVREIMRRQPTPVLMFSSLTYDGARETLDALDAGASDFIPKRFADISGDMEQVKRQLQERVLALGGGRGAPAGRAPRPAAPVDRGARSERARPAPGEASGRAPVPPTGARARPEAPVAPTGAPAAPAPERGQRIRPGALRLVVIGTSTGGPVALQRVMSRLPAGFPLPVLIIQHMPASFTPAFAERLNELCRIEVREAKNGDELRPGQALLAPGGRQAGVEERGGKLTVRIFDASSDQFYKPSVDIAFASAAKYCPGKALGVVLTGMGADGCEGAKLLKRTGAPIWSQDEATSVIYGMPAAVAKAGVTDRVLPLDQVGEELAKLR</sequence>
<name>CHEB_ALKEH</name>
<proteinExistence type="inferred from homology"/>